<protein>
    <recommendedName>
        <fullName evidence="1">Methionine import ATP-binding protein MetN</fullName>
        <ecNumber evidence="1">7.4.2.11</ecNumber>
    </recommendedName>
</protein>
<dbReference type="EC" id="7.4.2.11" evidence="1"/>
<dbReference type="EMBL" id="AY123045">
    <property type="protein sequence ID" value="AAN04540.1"/>
    <property type="molecule type" value="Genomic_DNA"/>
</dbReference>
<dbReference type="EMBL" id="FP236829">
    <property type="protein sequence ID" value="CAX53406.1"/>
    <property type="molecule type" value="Genomic_DNA"/>
</dbReference>
<dbReference type="RefSeq" id="NP_758753.1">
    <property type="nucleotide sequence ID" value="NC_004445.1"/>
</dbReference>
<dbReference type="RefSeq" id="WP_011078067.1">
    <property type="nucleotide sequence ID" value="NC_004445.1"/>
</dbReference>
<dbReference type="SMR" id="Q8GEH7"/>
<dbReference type="GeneID" id="92238888"/>
<dbReference type="KEGG" id="epy:EpC_pEp360040"/>
<dbReference type="HOGENOM" id="CLU_000604_1_3_6"/>
<dbReference type="Proteomes" id="UP000007061">
    <property type="component" value="Plasmid pEP36"/>
</dbReference>
<dbReference type="GO" id="GO:0005886">
    <property type="term" value="C:plasma membrane"/>
    <property type="evidence" value="ECO:0007669"/>
    <property type="project" value="UniProtKB-SubCell"/>
</dbReference>
<dbReference type="GO" id="GO:0033232">
    <property type="term" value="F:ABC-type D-methionine transporter activity"/>
    <property type="evidence" value="ECO:0007669"/>
    <property type="project" value="UniProtKB-EC"/>
</dbReference>
<dbReference type="GO" id="GO:0005524">
    <property type="term" value="F:ATP binding"/>
    <property type="evidence" value="ECO:0007669"/>
    <property type="project" value="UniProtKB-KW"/>
</dbReference>
<dbReference type="GO" id="GO:0016887">
    <property type="term" value="F:ATP hydrolysis activity"/>
    <property type="evidence" value="ECO:0007669"/>
    <property type="project" value="InterPro"/>
</dbReference>
<dbReference type="CDD" id="cd03258">
    <property type="entry name" value="ABC_MetN_methionine_transporter"/>
    <property type="match status" value="1"/>
</dbReference>
<dbReference type="Gene3D" id="3.30.70.260">
    <property type="match status" value="1"/>
</dbReference>
<dbReference type="Gene3D" id="3.40.50.300">
    <property type="entry name" value="P-loop containing nucleotide triphosphate hydrolases"/>
    <property type="match status" value="1"/>
</dbReference>
<dbReference type="InterPro" id="IPR003593">
    <property type="entry name" value="AAA+_ATPase"/>
</dbReference>
<dbReference type="InterPro" id="IPR003439">
    <property type="entry name" value="ABC_transporter-like_ATP-bd"/>
</dbReference>
<dbReference type="InterPro" id="IPR017871">
    <property type="entry name" value="ABC_transporter-like_CS"/>
</dbReference>
<dbReference type="InterPro" id="IPR045865">
    <property type="entry name" value="ACT-like_dom_sf"/>
</dbReference>
<dbReference type="InterPro" id="IPR041701">
    <property type="entry name" value="MetN_ABC"/>
</dbReference>
<dbReference type="InterPro" id="IPR050086">
    <property type="entry name" value="MetN_ABC_transporter-like"/>
</dbReference>
<dbReference type="InterPro" id="IPR018449">
    <property type="entry name" value="NIL_domain"/>
</dbReference>
<dbReference type="InterPro" id="IPR027417">
    <property type="entry name" value="P-loop_NTPase"/>
</dbReference>
<dbReference type="PANTHER" id="PTHR43166">
    <property type="entry name" value="AMINO ACID IMPORT ATP-BINDING PROTEIN"/>
    <property type="match status" value="1"/>
</dbReference>
<dbReference type="PANTHER" id="PTHR43166:SF36">
    <property type="entry name" value="METHIONINE IMPORT ATP-BINDING PROTEIN METN 2"/>
    <property type="match status" value="1"/>
</dbReference>
<dbReference type="Pfam" id="PF00005">
    <property type="entry name" value="ABC_tran"/>
    <property type="match status" value="1"/>
</dbReference>
<dbReference type="Pfam" id="PF09383">
    <property type="entry name" value="NIL"/>
    <property type="match status" value="1"/>
</dbReference>
<dbReference type="SMART" id="SM00382">
    <property type="entry name" value="AAA"/>
    <property type="match status" value="1"/>
</dbReference>
<dbReference type="SMART" id="SM00930">
    <property type="entry name" value="NIL"/>
    <property type="match status" value="1"/>
</dbReference>
<dbReference type="SUPFAM" id="SSF55021">
    <property type="entry name" value="ACT-like"/>
    <property type="match status" value="1"/>
</dbReference>
<dbReference type="SUPFAM" id="SSF52540">
    <property type="entry name" value="P-loop containing nucleoside triphosphate hydrolases"/>
    <property type="match status" value="1"/>
</dbReference>
<dbReference type="PROSITE" id="PS00211">
    <property type="entry name" value="ABC_TRANSPORTER_1"/>
    <property type="match status" value="1"/>
</dbReference>
<dbReference type="PROSITE" id="PS50893">
    <property type="entry name" value="ABC_TRANSPORTER_2"/>
    <property type="match status" value="1"/>
</dbReference>
<dbReference type="PROSITE" id="PS51264">
    <property type="entry name" value="METN"/>
    <property type="match status" value="1"/>
</dbReference>
<evidence type="ECO:0000255" key="1">
    <source>
        <dbReference type="HAMAP-Rule" id="MF_01719"/>
    </source>
</evidence>
<proteinExistence type="inferred from homology"/>
<reference key="1">
    <citation type="journal article" date="2002" name="Appl. Environ. Microbiol.">
        <title>Relatedness of chromosomal and plasmid DNAs of Erwinia pyrifoliae and Erwinia amylovora.</title>
        <authorList>
            <person name="McGhee G.C."/>
            <person name="Schnabel E.L."/>
            <person name="Maxson-Stein K."/>
            <person name="Jones B."/>
            <person name="Stromberg V.K."/>
            <person name="Lacy G.H."/>
            <person name="Jones A.L."/>
        </authorList>
    </citation>
    <scope>NUCLEOTIDE SEQUENCE [GENOMIC DNA]</scope>
    <source>
        <strain>DSM 12162 / Ep1/96</strain>
    </source>
</reference>
<reference key="2">
    <citation type="journal article" date="2010" name="BMC Genomics">
        <title>Genome comparison of the epiphytic bacteria Erwinia billingiae and E. tasmaniensis with the pear pathogen E. pyrifoliae.</title>
        <authorList>
            <person name="Kube M."/>
            <person name="Migdoll A.M."/>
            <person name="Gehring I."/>
            <person name="Heitmann K."/>
            <person name="Mayer Y."/>
            <person name="Kuhl H."/>
            <person name="Knaust F."/>
            <person name="Geider K."/>
            <person name="Reinhardt R."/>
        </authorList>
    </citation>
    <scope>NUCLEOTIDE SEQUENCE [LARGE SCALE GENOMIC DNA]</scope>
    <source>
        <strain>DSM 12162 / Ep1/96</strain>
    </source>
</reference>
<gene>
    <name evidence="1" type="primary">metN</name>
    <name type="ordered locus">EpC_pEp360040</name>
</gene>
<accession>Q8GEH7</accession>
<accession>C8ZLQ5</accession>
<name>METN_ERWPE</name>
<feature type="chain" id="PRO_0000270297" description="Methionine import ATP-binding protein MetN">
    <location>
        <begin position="1"/>
        <end position="326"/>
    </location>
</feature>
<feature type="domain" description="ABC transporter" evidence="1">
    <location>
        <begin position="1"/>
        <end position="226"/>
    </location>
</feature>
<feature type="binding site" evidence="1">
    <location>
        <begin position="23"/>
        <end position="30"/>
    </location>
    <ligand>
        <name>ATP</name>
        <dbReference type="ChEBI" id="CHEBI:30616"/>
    </ligand>
</feature>
<organism>
    <name type="scientific">Erwinia pyrifoliae (strain DSM 12162 / Ep1/96)</name>
    <dbReference type="NCBI Taxonomy" id="634499"/>
    <lineage>
        <taxon>Bacteria</taxon>
        <taxon>Pseudomonadati</taxon>
        <taxon>Pseudomonadota</taxon>
        <taxon>Gammaproteobacteria</taxon>
        <taxon>Enterobacterales</taxon>
        <taxon>Erwiniaceae</taxon>
        <taxon>Erwinia</taxon>
    </lineage>
</organism>
<keyword id="KW-0029">Amino-acid transport</keyword>
<keyword id="KW-0067">ATP-binding</keyword>
<keyword id="KW-0997">Cell inner membrane</keyword>
<keyword id="KW-1003">Cell membrane</keyword>
<keyword id="KW-0472">Membrane</keyword>
<keyword id="KW-0547">Nucleotide-binding</keyword>
<keyword id="KW-0614">Plasmid</keyword>
<keyword id="KW-1278">Translocase</keyword>
<keyword id="KW-0813">Transport</keyword>
<geneLocation type="plasmid">
    <name>pEP36</name>
</geneLocation>
<comment type="function">
    <text evidence="1">Part of the ABC transporter complex MetNIQ involved in methionine import. Responsible for energy coupling to the transport system.</text>
</comment>
<comment type="catalytic activity">
    <reaction evidence="1">
        <text>L-methionine(out) + ATP + H2O = L-methionine(in) + ADP + phosphate + H(+)</text>
        <dbReference type="Rhea" id="RHEA:29779"/>
        <dbReference type="ChEBI" id="CHEBI:15377"/>
        <dbReference type="ChEBI" id="CHEBI:15378"/>
        <dbReference type="ChEBI" id="CHEBI:30616"/>
        <dbReference type="ChEBI" id="CHEBI:43474"/>
        <dbReference type="ChEBI" id="CHEBI:57844"/>
        <dbReference type="ChEBI" id="CHEBI:456216"/>
        <dbReference type="EC" id="7.4.2.11"/>
    </reaction>
</comment>
<comment type="catalytic activity">
    <reaction evidence="1">
        <text>D-methionine(out) + ATP + H2O = D-methionine(in) + ADP + phosphate + H(+)</text>
        <dbReference type="Rhea" id="RHEA:29767"/>
        <dbReference type="ChEBI" id="CHEBI:15377"/>
        <dbReference type="ChEBI" id="CHEBI:15378"/>
        <dbReference type="ChEBI" id="CHEBI:30616"/>
        <dbReference type="ChEBI" id="CHEBI:43474"/>
        <dbReference type="ChEBI" id="CHEBI:57932"/>
        <dbReference type="ChEBI" id="CHEBI:456216"/>
        <dbReference type="EC" id="7.4.2.11"/>
    </reaction>
</comment>
<comment type="subunit">
    <text evidence="1">The complex is composed of two ATP-binding proteins (MetN), two transmembrane proteins (MetI) and a solute-binding protein (MetQ).</text>
</comment>
<comment type="subcellular location">
    <subcellularLocation>
        <location evidence="1">Cell inner membrane</location>
        <topology evidence="1">Peripheral membrane protein</topology>
    </subcellularLocation>
</comment>
<comment type="similarity">
    <text evidence="1">Belongs to the ABC transporter superfamily. Methionine importer (TC 3.A.1.24) family.</text>
</comment>
<sequence length="326" mass="35739">MVFYTIGPQTPQIDKGQIYGIIGYSGAGKSTLIRLLNGLEKPGSGSVTIAGQDIAQASVEALRQARLKISMVFQHFNLLWSRTVSENIAFSLQISGTSKSVIQDRVQELIALVGLVGKEQAYPSQLSGGQKQRVGIARALANNPNVLLCDEATSALDPQTTDAILELLLDINRKLWLTIVLITHEMHVVRKICHRVAVMEEGRIVEEGEVLSLFTHPQQPITRQFVKQTSGYISANVPFNPQLVNIDNGKVLKLTFVGQSTQQPVIGELTLKYGLAFNMLHGIMTQTTNGTFGEIWLQVPASQSQLPRILADLHAYEISTEVVTNV</sequence>